<gene>
    <name evidence="1" type="primary">gcvPA</name>
    <name type="ordered locus">GTNG_2363</name>
</gene>
<proteinExistence type="inferred from homology"/>
<protein>
    <recommendedName>
        <fullName evidence="1">Probable glycine dehydrogenase (decarboxylating) subunit 1</fullName>
        <ecNumber evidence="1">1.4.4.2</ecNumber>
    </recommendedName>
    <alternativeName>
        <fullName evidence="1">Glycine cleavage system P-protein subunit 1</fullName>
    </alternativeName>
    <alternativeName>
        <fullName evidence="1">Glycine decarboxylase subunit 1</fullName>
    </alternativeName>
    <alternativeName>
        <fullName evidence="1">Glycine dehydrogenase (aminomethyl-transferring) subunit 1</fullName>
    </alternativeName>
</protein>
<reference key="1">
    <citation type="journal article" date="2007" name="Proc. Natl. Acad. Sci. U.S.A.">
        <title>Genome and proteome of long-chain alkane degrading Geobacillus thermodenitrificans NG80-2 isolated from a deep-subsurface oil reservoir.</title>
        <authorList>
            <person name="Feng L."/>
            <person name="Wang W."/>
            <person name="Cheng J."/>
            <person name="Ren Y."/>
            <person name="Zhao G."/>
            <person name="Gao C."/>
            <person name="Tang Y."/>
            <person name="Liu X."/>
            <person name="Han W."/>
            <person name="Peng X."/>
            <person name="Liu R."/>
            <person name="Wang L."/>
        </authorList>
    </citation>
    <scope>NUCLEOTIDE SEQUENCE [LARGE SCALE GENOMIC DNA]</scope>
    <source>
        <strain>NG80-2</strain>
    </source>
</reference>
<evidence type="ECO:0000255" key="1">
    <source>
        <dbReference type="HAMAP-Rule" id="MF_00712"/>
    </source>
</evidence>
<sequence length="448" mass="49693">MLHRYLPMTEEDKQEMLKTIGVASIDELFADIPEQVRFRGELNVKRAKSEPELWKELSALADKNANARQYVSFLGAGVYDHYIPAVVDHVLMRSEFYTAYTPYQPEISQGELQAIFEFQTMVCELTGMDVANSSMYDGGTALAEAVLLSAAHTKRRKVLISNAVHPQYREVVRTYANGQRLEVKEIPYNGGVTDLEVLAAEMGDDVACVVIQYPNFFGQIEPLKAIEPLVHEKKSLFVVASNPLALGVLTPPGEFGADIVVGDMQPFGIPMQFGGPHCGYFAVKAPLMRKIPGRLVGQTTDEEGRRGFVLTLQAREQHIRRDKATSNICSNQALNALAASVALSALGKRGVKEMATMNMQKAHYAKSELQKRGLLSPFAGPFFNEFVIRLNQPVDDVNARLRQKGIIGGYNLGFDYPELANHMLVAVTELRTKEEIDRFVNELGDGHA</sequence>
<dbReference type="EC" id="1.4.4.2" evidence="1"/>
<dbReference type="EMBL" id="CP000557">
    <property type="protein sequence ID" value="ABO67708.1"/>
    <property type="molecule type" value="Genomic_DNA"/>
</dbReference>
<dbReference type="RefSeq" id="WP_008879841.1">
    <property type="nucleotide sequence ID" value="NC_009328.1"/>
</dbReference>
<dbReference type="SMR" id="A4IQV4"/>
<dbReference type="KEGG" id="gtn:GTNG_2363"/>
<dbReference type="eggNOG" id="COG0403">
    <property type="taxonomic scope" value="Bacteria"/>
</dbReference>
<dbReference type="HOGENOM" id="CLU_004620_0_2_9"/>
<dbReference type="Proteomes" id="UP000001578">
    <property type="component" value="Chromosome"/>
</dbReference>
<dbReference type="GO" id="GO:0004375">
    <property type="term" value="F:glycine dehydrogenase (decarboxylating) activity"/>
    <property type="evidence" value="ECO:0007669"/>
    <property type="project" value="UniProtKB-EC"/>
</dbReference>
<dbReference type="GO" id="GO:0019464">
    <property type="term" value="P:glycine decarboxylation via glycine cleavage system"/>
    <property type="evidence" value="ECO:0007669"/>
    <property type="project" value="UniProtKB-UniRule"/>
</dbReference>
<dbReference type="GO" id="GO:0009116">
    <property type="term" value="P:nucleoside metabolic process"/>
    <property type="evidence" value="ECO:0007669"/>
    <property type="project" value="InterPro"/>
</dbReference>
<dbReference type="CDD" id="cd00613">
    <property type="entry name" value="GDC-P"/>
    <property type="match status" value="1"/>
</dbReference>
<dbReference type="FunFam" id="3.40.640.10:FF:000113">
    <property type="entry name" value="Probable glycine dehydrogenase (decarboxylating) subunit 1"/>
    <property type="match status" value="1"/>
</dbReference>
<dbReference type="Gene3D" id="3.90.1150.10">
    <property type="entry name" value="Aspartate Aminotransferase, domain 1"/>
    <property type="match status" value="1"/>
</dbReference>
<dbReference type="Gene3D" id="3.40.640.10">
    <property type="entry name" value="Type I PLP-dependent aspartate aminotransferase-like (Major domain)"/>
    <property type="match status" value="1"/>
</dbReference>
<dbReference type="HAMAP" id="MF_00712">
    <property type="entry name" value="GcvPA"/>
    <property type="match status" value="1"/>
</dbReference>
<dbReference type="InterPro" id="IPR023010">
    <property type="entry name" value="GcvPA"/>
</dbReference>
<dbReference type="InterPro" id="IPR049315">
    <property type="entry name" value="GDC-P_N"/>
</dbReference>
<dbReference type="InterPro" id="IPR020581">
    <property type="entry name" value="GDC_P"/>
</dbReference>
<dbReference type="InterPro" id="IPR015424">
    <property type="entry name" value="PyrdxlP-dep_Trfase"/>
</dbReference>
<dbReference type="InterPro" id="IPR015421">
    <property type="entry name" value="PyrdxlP-dep_Trfase_major"/>
</dbReference>
<dbReference type="InterPro" id="IPR015422">
    <property type="entry name" value="PyrdxlP-dep_Trfase_small"/>
</dbReference>
<dbReference type="NCBIfam" id="NF001696">
    <property type="entry name" value="PRK00451.1"/>
    <property type="match status" value="1"/>
</dbReference>
<dbReference type="PANTHER" id="PTHR42806">
    <property type="entry name" value="GLYCINE CLEAVAGE SYSTEM P-PROTEIN"/>
    <property type="match status" value="1"/>
</dbReference>
<dbReference type="PANTHER" id="PTHR42806:SF1">
    <property type="entry name" value="GLYCINE DEHYDROGENASE (DECARBOXYLATING)"/>
    <property type="match status" value="1"/>
</dbReference>
<dbReference type="Pfam" id="PF02347">
    <property type="entry name" value="GDC-P"/>
    <property type="match status" value="1"/>
</dbReference>
<dbReference type="PIRSF" id="PIRSF006815">
    <property type="entry name" value="GcvPA"/>
    <property type="match status" value="1"/>
</dbReference>
<dbReference type="SUPFAM" id="SSF53383">
    <property type="entry name" value="PLP-dependent transferases"/>
    <property type="match status" value="1"/>
</dbReference>
<feature type="chain" id="PRO_1000045657" description="Probable glycine dehydrogenase (decarboxylating) subunit 1">
    <location>
        <begin position="1"/>
        <end position="448"/>
    </location>
</feature>
<accession>A4IQV4</accession>
<organism>
    <name type="scientific">Geobacillus thermodenitrificans (strain NG80-2)</name>
    <dbReference type="NCBI Taxonomy" id="420246"/>
    <lineage>
        <taxon>Bacteria</taxon>
        <taxon>Bacillati</taxon>
        <taxon>Bacillota</taxon>
        <taxon>Bacilli</taxon>
        <taxon>Bacillales</taxon>
        <taxon>Anoxybacillaceae</taxon>
        <taxon>Geobacillus</taxon>
    </lineage>
</organism>
<keyword id="KW-0560">Oxidoreductase</keyword>
<comment type="function">
    <text evidence="1">The glycine cleavage system catalyzes the degradation of glycine. The P protein binds the alpha-amino group of glycine through its pyridoxal phosphate cofactor; CO(2) is released and the remaining methylamine moiety is then transferred to the lipoamide cofactor of the H protein.</text>
</comment>
<comment type="catalytic activity">
    <reaction evidence="1">
        <text>N(6)-[(R)-lipoyl]-L-lysyl-[glycine-cleavage complex H protein] + glycine + H(+) = N(6)-[(R)-S(8)-aminomethyldihydrolipoyl]-L-lysyl-[glycine-cleavage complex H protein] + CO2</text>
        <dbReference type="Rhea" id="RHEA:24304"/>
        <dbReference type="Rhea" id="RHEA-COMP:10494"/>
        <dbReference type="Rhea" id="RHEA-COMP:10495"/>
        <dbReference type="ChEBI" id="CHEBI:15378"/>
        <dbReference type="ChEBI" id="CHEBI:16526"/>
        <dbReference type="ChEBI" id="CHEBI:57305"/>
        <dbReference type="ChEBI" id="CHEBI:83099"/>
        <dbReference type="ChEBI" id="CHEBI:83143"/>
        <dbReference type="EC" id="1.4.4.2"/>
    </reaction>
</comment>
<comment type="subunit">
    <text evidence="1">The glycine cleavage system is composed of four proteins: P, T, L and H. In this organism, the P 'protein' is a heterodimer of two subunits.</text>
</comment>
<comment type="similarity">
    <text evidence="1">Belongs to the GcvP family. N-terminal subunit subfamily.</text>
</comment>
<name>GCSPA_GEOTN</name>